<comment type="function">
    <text evidence="1">Plays a role in the apoptotic process and has a pro-apoptotic activity.</text>
</comment>
<comment type="subcellular location">
    <subcellularLocation>
        <location evidence="1">Mitochondrion membrane</location>
        <topology evidence="2">Multi-pass membrane protein</topology>
    </subcellularLocation>
</comment>
<comment type="similarity">
    <text evidence="5">Belongs to the IFI6/IFI27 family.</text>
</comment>
<protein>
    <recommendedName>
        <fullName evidence="5">Interferon alpha-inducible protein 27-like protein 2</fullName>
    </recommendedName>
    <alternativeName>
        <fullName evidence="4">Interferon-stimulated gene 12b protein</fullName>
        <shortName evidence="4">ISG12(b)</shortName>
    </alternativeName>
</protein>
<feature type="chain" id="PRO_0000247471" description="Interferon alpha-inducible protein 27-like protein 2">
    <location>
        <begin position="1"/>
        <end position="133"/>
    </location>
</feature>
<feature type="transmembrane region" description="Helical" evidence="2">
    <location>
        <begin position="8"/>
        <end position="28"/>
    </location>
</feature>
<feature type="transmembrane region" description="Helical" evidence="2">
    <location>
        <begin position="51"/>
        <end position="71"/>
    </location>
</feature>
<feature type="transmembrane region" description="Helical" evidence="2">
    <location>
        <begin position="73"/>
        <end position="93"/>
    </location>
</feature>
<feature type="region of interest" description="Disordered" evidence="3">
    <location>
        <begin position="93"/>
        <end position="133"/>
    </location>
</feature>
<gene>
    <name evidence="1" type="primary">IFI27L2</name>
    <name type="synonym">FAM14A</name>
</gene>
<name>I27L2_BOVIN</name>
<proteinExistence type="evidence at transcript level"/>
<evidence type="ECO:0000250" key="1">
    <source>
        <dbReference type="UniProtKB" id="Q9H2X8"/>
    </source>
</evidence>
<evidence type="ECO:0000255" key="2"/>
<evidence type="ECO:0000256" key="3">
    <source>
        <dbReference type="SAM" id="MobiDB-lite"/>
    </source>
</evidence>
<evidence type="ECO:0000303" key="4">
    <source>
    </source>
</evidence>
<evidence type="ECO:0000305" key="5"/>
<dbReference type="EMBL" id="BC114186">
    <property type="protein sequence ID" value="AAI14187.1"/>
    <property type="molecule type" value="mRNA"/>
</dbReference>
<dbReference type="EMBL" id="BN000215">
    <property type="protein sequence ID" value="CAE00382.1"/>
    <property type="molecule type" value="mRNA"/>
</dbReference>
<dbReference type="RefSeq" id="NP_001069529.1">
    <property type="nucleotide sequence ID" value="NM_001076061.2"/>
</dbReference>
<dbReference type="FunCoup" id="Q24JY7">
    <property type="interactions" value="30"/>
</dbReference>
<dbReference type="STRING" id="9913.ENSBTAP00000059972"/>
<dbReference type="PaxDb" id="9913-ENSBTAP00000004098"/>
<dbReference type="Ensembl" id="ENSBTAT00000004098.5">
    <property type="protein sequence ID" value="ENSBTAP00000004098.3"/>
    <property type="gene ID" value="ENSBTAG00000003155.5"/>
</dbReference>
<dbReference type="GeneID" id="535465"/>
<dbReference type="KEGG" id="bta:535465"/>
<dbReference type="CTD" id="83982"/>
<dbReference type="VEuPathDB" id="HostDB:ENSBTAG00000003155"/>
<dbReference type="eggNOG" id="ENOG502S85T">
    <property type="taxonomic scope" value="Eukaryota"/>
</dbReference>
<dbReference type="GeneTree" id="ENSGT00940000155018"/>
<dbReference type="HOGENOM" id="CLU_142338_0_0_1"/>
<dbReference type="InParanoid" id="Q24JY7"/>
<dbReference type="TreeFam" id="TF340510"/>
<dbReference type="Proteomes" id="UP000009136">
    <property type="component" value="Chromosome 21"/>
</dbReference>
<dbReference type="Bgee" id="ENSBTAG00000003155">
    <property type="expression patterns" value="Expressed in anterior segment of eyeball and 102 other cell types or tissues"/>
</dbReference>
<dbReference type="GO" id="GO:0031966">
    <property type="term" value="C:mitochondrial membrane"/>
    <property type="evidence" value="ECO:0000250"/>
    <property type="project" value="UniProtKB"/>
</dbReference>
<dbReference type="GO" id="GO:0060090">
    <property type="term" value="F:molecular adaptor activity"/>
    <property type="evidence" value="ECO:0000318"/>
    <property type="project" value="GO_Central"/>
</dbReference>
<dbReference type="GO" id="GO:0006915">
    <property type="term" value="P:apoptotic process"/>
    <property type="evidence" value="ECO:0000250"/>
    <property type="project" value="UniProtKB"/>
</dbReference>
<dbReference type="GO" id="GO:0097193">
    <property type="term" value="P:intrinsic apoptotic signaling pathway"/>
    <property type="evidence" value="ECO:0000318"/>
    <property type="project" value="GO_Central"/>
</dbReference>
<dbReference type="Gene3D" id="6.10.110.10">
    <property type="match status" value="1"/>
</dbReference>
<dbReference type="InterPro" id="IPR009311">
    <property type="entry name" value="IFI6/IFI27-like"/>
</dbReference>
<dbReference type="InterPro" id="IPR038213">
    <property type="entry name" value="IFI6/IFI27-like_sf"/>
</dbReference>
<dbReference type="PANTHER" id="PTHR16932">
    <property type="entry name" value="INTERFERON ALPHA-INDUCIBLE PROTEIN 27"/>
    <property type="match status" value="1"/>
</dbReference>
<dbReference type="PANTHER" id="PTHR16932:SF2">
    <property type="entry name" value="INTERFERON ALPHA-INDUCIBLE PROTEIN 27, MITOCHONDRIAL"/>
    <property type="match status" value="1"/>
</dbReference>
<dbReference type="Pfam" id="PF06140">
    <property type="entry name" value="Ifi-6-16"/>
    <property type="match status" value="1"/>
</dbReference>
<organism>
    <name type="scientific">Bos taurus</name>
    <name type="common">Bovine</name>
    <dbReference type="NCBI Taxonomy" id="9913"/>
    <lineage>
        <taxon>Eukaryota</taxon>
        <taxon>Metazoa</taxon>
        <taxon>Chordata</taxon>
        <taxon>Craniata</taxon>
        <taxon>Vertebrata</taxon>
        <taxon>Euteleostomi</taxon>
        <taxon>Mammalia</taxon>
        <taxon>Eutheria</taxon>
        <taxon>Laurasiatheria</taxon>
        <taxon>Artiodactyla</taxon>
        <taxon>Ruminantia</taxon>
        <taxon>Pecora</taxon>
        <taxon>Bovidae</taxon>
        <taxon>Bovinae</taxon>
        <taxon>Bos</taxon>
    </lineage>
</organism>
<sequence length="133" mass="12398">MIKRAAAAAIGGALAVAAVPAVLGAVGFTGAGIAASSLAAKMMSAAAVANGGGVAAGSLVATLQSVGAAGLSTSSNILLGSIGSAFGALLGGAKRASPSPPPGGPRPEGEQPGENVPQVEPPKSPLGPEKHEK</sequence>
<accession>Q24JY7</accession>
<accession>Q6IED3</accession>
<reference key="1">
    <citation type="submission" date="2006-02" db="EMBL/GenBank/DDBJ databases">
        <authorList>
            <consortium name="NIH - Mammalian Gene Collection (MGC) project"/>
        </authorList>
    </citation>
    <scope>NUCLEOTIDE SEQUENCE [LARGE SCALE MRNA]</scope>
    <source>
        <strain>Hereford</strain>
        <tissue>Hypothalamus</tissue>
    </source>
</reference>
<reference key="2">
    <citation type="journal article" date="2004" name="BMC Genomics">
        <title>Identification of a novel gene family that includes the interferon-inducible human genes 6-16 and ISG12.</title>
        <authorList>
            <person name="Parker N."/>
            <person name="Porter A.C.G."/>
        </authorList>
    </citation>
    <scope>IDENTIFICATION</scope>
</reference>
<keyword id="KW-0053">Apoptosis</keyword>
<keyword id="KW-0472">Membrane</keyword>
<keyword id="KW-0496">Mitochondrion</keyword>
<keyword id="KW-1185">Reference proteome</keyword>
<keyword id="KW-0812">Transmembrane</keyword>
<keyword id="KW-1133">Transmembrane helix</keyword>